<gene>
    <name evidence="1" type="primary">rlmE</name>
    <name evidence="1" type="synonym">ftsJ</name>
    <name evidence="1" type="synonym">rrmJ</name>
    <name type="ordered locus">lpg2797</name>
</gene>
<reference key="1">
    <citation type="journal article" date="2004" name="Science">
        <title>The genomic sequence of the accidental pathogen Legionella pneumophila.</title>
        <authorList>
            <person name="Chien M."/>
            <person name="Morozova I."/>
            <person name="Shi S."/>
            <person name="Sheng H."/>
            <person name="Chen J."/>
            <person name="Gomez S.M."/>
            <person name="Asamani G."/>
            <person name="Hill K."/>
            <person name="Nuara J."/>
            <person name="Feder M."/>
            <person name="Rineer J."/>
            <person name="Greenberg J.J."/>
            <person name="Steshenko V."/>
            <person name="Park S.H."/>
            <person name="Zhao B."/>
            <person name="Teplitskaya E."/>
            <person name="Edwards J.R."/>
            <person name="Pampou S."/>
            <person name="Georghiou A."/>
            <person name="Chou I.-C."/>
            <person name="Iannuccilli W."/>
            <person name="Ulz M.E."/>
            <person name="Kim D.H."/>
            <person name="Geringer-Sameth A."/>
            <person name="Goldsberry C."/>
            <person name="Morozov P."/>
            <person name="Fischer S.G."/>
            <person name="Segal G."/>
            <person name="Qu X."/>
            <person name="Rzhetsky A."/>
            <person name="Zhang P."/>
            <person name="Cayanis E."/>
            <person name="De Jong P.J."/>
            <person name="Ju J."/>
            <person name="Kalachikov S."/>
            <person name="Shuman H.A."/>
            <person name="Russo J.J."/>
        </authorList>
    </citation>
    <scope>NUCLEOTIDE SEQUENCE [LARGE SCALE GENOMIC DNA]</scope>
    <source>
        <strain>Philadelphia 1 / ATCC 33152 / DSM 7513</strain>
    </source>
</reference>
<protein>
    <recommendedName>
        <fullName evidence="1">Ribosomal RNA large subunit methyltransferase E</fullName>
        <ecNumber evidence="1">2.1.1.166</ecNumber>
    </recommendedName>
    <alternativeName>
        <fullName evidence="1">23S rRNA Um2552 methyltransferase</fullName>
    </alternativeName>
    <alternativeName>
        <fullName evidence="1">rRNA (uridine-2'-O-)-methyltransferase</fullName>
    </alternativeName>
</protein>
<keyword id="KW-0963">Cytoplasm</keyword>
<keyword id="KW-0489">Methyltransferase</keyword>
<keyword id="KW-1185">Reference proteome</keyword>
<keyword id="KW-0698">rRNA processing</keyword>
<keyword id="KW-0949">S-adenosyl-L-methionine</keyword>
<keyword id="KW-0808">Transferase</keyword>
<proteinExistence type="inferred from homology"/>
<comment type="function">
    <text evidence="1">Specifically methylates the uridine in position 2552 of 23S rRNA at the 2'-O position of the ribose in the fully assembled 50S ribosomal subunit.</text>
</comment>
<comment type="catalytic activity">
    <reaction evidence="1">
        <text>uridine(2552) in 23S rRNA + S-adenosyl-L-methionine = 2'-O-methyluridine(2552) in 23S rRNA + S-adenosyl-L-homocysteine + H(+)</text>
        <dbReference type="Rhea" id="RHEA:42720"/>
        <dbReference type="Rhea" id="RHEA-COMP:10202"/>
        <dbReference type="Rhea" id="RHEA-COMP:10203"/>
        <dbReference type="ChEBI" id="CHEBI:15378"/>
        <dbReference type="ChEBI" id="CHEBI:57856"/>
        <dbReference type="ChEBI" id="CHEBI:59789"/>
        <dbReference type="ChEBI" id="CHEBI:65315"/>
        <dbReference type="ChEBI" id="CHEBI:74478"/>
        <dbReference type="EC" id="2.1.1.166"/>
    </reaction>
</comment>
<comment type="subcellular location">
    <subcellularLocation>
        <location evidence="1">Cytoplasm</location>
    </subcellularLocation>
</comment>
<comment type="similarity">
    <text evidence="1">Belongs to the class I-like SAM-binding methyltransferase superfamily. RNA methyltransferase RlmE family.</text>
</comment>
<comment type="sequence caution" evidence="2">
    <conflict type="erroneous initiation">
        <sequence resource="EMBL-CDS" id="AAU28846"/>
    </conflict>
</comment>
<name>RLME_LEGPH</name>
<sequence>MNRTKSSKRWLQEHFDDVYVKKAQAEGYRSRAVYKLKEIDDKESLIKPGMTVVDLGAAPGGWTQYASEKMRGSGRLVALDILPMDALPNVEFILGDFREDNVLQELINLIPQRTLDLLLSDMAPNMSGSSAIDIPRAMYLVELAFDFAEKMLKPGGNMLVKIFHGSGFDELVKQARASFEKVVIRKPSASRSRSKETYLLAKGYNL</sequence>
<organism>
    <name type="scientific">Legionella pneumophila subsp. pneumophila (strain Philadelphia 1 / ATCC 33152 / DSM 7513)</name>
    <dbReference type="NCBI Taxonomy" id="272624"/>
    <lineage>
        <taxon>Bacteria</taxon>
        <taxon>Pseudomonadati</taxon>
        <taxon>Pseudomonadota</taxon>
        <taxon>Gammaproteobacteria</taxon>
        <taxon>Legionellales</taxon>
        <taxon>Legionellaceae</taxon>
        <taxon>Legionella</taxon>
    </lineage>
</organism>
<evidence type="ECO:0000255" key="1">
    <source>
        <dbReference type="HAMAP-Rule" id="MF_01547"/>
    </source>
</evidence>
<evidence type="ECO:0000305" key="2"/>
<accession>Q5ZRT1</accession>
<feature type="chain" id="PRO_0000155508" description="Ribosomal RNA large subunit methyltransferase E">
    <location>
        <begin position="1"/>
        <end position="206"/>
    </location>
</feature>
<feature type="active site" description="Proton acceptor" evidence="1">
    <location>
        <position position="161"/>
    </location>
</feature>
<feature type="binding site" evidence="1">
    <location>
        <position position="60"/>
    </location>
    <ligand>
        <name>S-adenosyl-L-methionine</name>
        <dbReference type="ChEBI" id="CHEBI:59789"/>
    </ligand>
</feature>
<feature type="binding site" evidence="1">
    <location>
        <position position="62"/>
    </location>
    <ligand>
        <name>S-adenosyl-L-methionine</name>
        <dbReference type="ChEBI" id="CHEBI:59789"/>
    </ligand>
</feature>
<feature type="binding site" evidence="1">
    <location>
        <position position="80"/>
    </location>
    <ligand>
        <name>S-adenosyl-L-methionine</name>
        <dbReference type="ChEBI" id="CHEBI:59789"/>
    </ligand>
</feature>
<feature type="binding site" evidence="1">
    <location>
        <position position="96"/>
    </location>
    <ligand>
        <name>S-adenosyl-L-methionine</name>
        <dbReference type="ChEBI" id="CHEBI:59789"/>
    </ligand>
</feature>
<feature type="binding site" evidence="1">
    <location>
        <position position="121"/>
    </location>
    <ligand>
        <name>S-adenosyl-L-methionine</name>
        <dbReference type="ChEBI" id="CHEBI:59789"/>
    </ligand>
</feature>
<dbReference type="EC" id="2.1.1.166" evidence="1"/>
<dbReference type="EMBL" id="AE017354">
    <property type="protein sequence ID" value="AAU28846.1"/>
    <property type="status" value="ALT_INIT"/>
    <property type="molecule type" value="Genomic_DNA"/>
</dbReference>
<dbReference type="RefSeq" id="WP_015443939.1">
    <property type="nucleotide sequence ID" value="NC_002942.5"/>
</dbReference>
<dbReference type="RefSeq" id="YP_096793.1">
    <property type="nucleotide sequence ID" value="NC_002942.5"/>
</dbReference>
<dbReference type="SMR" id="Q5ZRT1"/>
<dbReference type="STRING" id="272624.lpg2797"/>
<dbReference type="PaxDb" id="272624-lpg2797"/>
<dbReference type="GeneID" id="57036795"/>
<dbReference type="KEGG" id="lpn:lpg2797"/>
<dbReference type="PATRIC" id="fig|272624.6.peg.2978"/>
<dbReference type="eggNOG" id="COG0293">
    <property type="taxonomic scope" value="Bacteria"/>
</dbReference>
<dbReference type="HOGENOM" id="CLU_009422_4_0_6"/>
<dbReference type="OrthoDB" id="9790080at2"/>
<dbReference type="Proteomes" id="UP000000609">
    <property type="component" value="Chromosome"/>
</dbReference>
<dbReference type="GO" id="GO:0005737">
    <property type="term" value="C:cytoplasm"/>
    <property type="evidence" value="ECO:0007669"/>
    <property type="project" value="UniProtKB-SubCell"/>
</dbReference>
<dbReference type="GO" id="GO:0008650">
    <property type="term" value="F:rRNA (uridine-2'-O-)-methyltransferase activity"/>
    <property type="evidence" value="ECO:0007669"/>
    <property type="project" value="UniProtKB-UniRule"/>
</dbReference>
<dbReference type="FunFam" id="3.40.50.150:FF:000005">
    <property type="entry name" value="Ribosomal RNA large subunit methyltransferase E"/>
    <property type="match status" value="1"/>
</dbReference>
<dbReference type="Gene3D" id="3.40.50.150">
    <property type="entry name" value="Vaccinia Virus protein VP39"/>
    <property type="match status" value="1"/>
</dbReference>
<dbReference type="HAMAP" id="MF_01547">
    <property type="entry name" value="RNA_methyltr_E"/>
    <property type="match status" value="1"/>
</dbReference>
<dbReference type="InterPro" id="IPR050082">
    <property type="entry name" value="RNA_methyltr_RlmE"/>
</dbReference>
<dbReference type="InterPro" id="IPR002877">
    <property type="entry name" value="RNA_MeTrfase_FtsJ_dom"/>
</dbReference>
<dbReference type="InterPro" id="IPR015507">
    <property type="entry name" value="rRNA-MeTfrase_E"/>
</dbReference>
<dbReference type="InterPro" id="IPR029063">
    <property type="entry name" value="SAM-dependent_MTases_sf"/>
</dbReference>
<dbReference type="NCBIfam" id="NF008390">
    <property type="entry name" value="PRK11188.1"/>
    <property type="match status" value="1"/>
</dbReference>
<dbReference type="PANTHER" id="PTHR10920">
    <property type="entry name" value="RIBOSOMAL RNA METHYLTRANSFERASE"/>
    <property type="match status" value="1"/>
</dbReference>
<dbReference type="PANTHER" id="PTHR10920:SF18">
    <property type="entry name" value="RRNA METHYLTRANSFERASE 2, MITOCHONDRIAL"/>
    <property type="match status" value="1"/>
</dbReference>
<dbReference type="Pfam" id="PF01728">
    <property type="entry name" value="FtsJ"/>
    <property type="match status" value="1"/>
</dbReference>
<dbReference type="PIRSF" id="PIRSF005461">
    <property type="entry name" value="23S_rRNA_mtase"/>
    <property type="match status" value="1"/>
</dbReference>
<dbReference type="SUPFAM" id="SSF53335">
    <property type="entry name" value="S-adenosyl-L-methionine-dependent methyltransferases"/>
    <property type="match status" value="1"/>
</dbReference>